<organism>
    <name type="scientific">Psychromonas ingrahamii (strain DSM 17664 / CCUG 51855 / 37)</name>
    <dbReference type="NCBI Taxonomy" id="357804"/>
    <lineage>
        <taxon>Bacteria</taxon>
        <taxon>Pseudomonadati</taxon>
        <taxon>Pseudomonadota</taxon>
        <taxon>Gammaproteobacteria</taxon>
        <taxon>Alteromonadales</taxon>
        <taxon>Psychromonadaceae</taxon>
        <taxon>Psychromonas</taxon>
    </lineage>
</organism>
<protein>
    <recommendedName>
        <fullName evidence="1">Tryptophan synthase beta chain</fullName>
        <ecNumber evidence="1">4.2.1.20</ecNumber>
    </recommendedName>
</protein>
<comment type="function">
    <text evidence="1">The beta subunit is responsible for the synthesis of L-tryptophan from indole and L-serine.</text>
</comment>
<comment type="catalytic activity">
    <reaction evidence="1">
        <text>(1S,2R)-1-C-(indol-3-yl)glycerol 3-phosphate + L-serine = D-glyceraldehyde 3-phosphate + L-tryptophan + H2O</text>
        <dbReference type="Rhea" id="RHEA:10532"/>
        <dbReference type="ChEBI" id="CHEBI:15377"/>
        <dbReference type="ChEBI" id="CHEBI:33384"/>
        <dbReference type="ChEBI" id="CHEBI:57912"/>
        <dbReference type="ChEBI" id="CHEBI:58866"/>
        <dbReference type="ChEBI" id="CHEBI:59776"/>
        <dbReference type="EC" id="4.2.1.20"/>
    </reaction>
</comment>
<comment type="cofactor">
    <cofactor evidence="1">
        <name>pyridoxal 5'-phosphate</name>
        <dbReference type="ChEBI" id="CHEBI:597326"/>
    </cofactor>
</comment>
<comment type="pathway">
    <text evidence="1">Amino-acid biosynthesis; L-tryptophan biosynthesis; L-tryptophan from chorismate: step 5/5.</text>
</comment>
<comment type="subunit">
    <text evidence="1">Tetramer of two alpha and two beta chains.</text>
</comment>
<comment type="similarity">
    <text evidence="1">Belongs to the TrpB family.</text>
</comment>
<gene>
    <name evidence="1" type="primary">trpB</name>
    <name type="ordered locus">Ping_1056</name>
</gene>
<dbReference type="EC" id="4.2.1.20" evidence="1"/>
<dbReference type="EMBL" id="CP000510">
    <property type="protein sequence ID" value="ABM02895.1"/>
    <property type="molecule type" value="Genomic_DNA"/>
</dbReference>
<dbReference type="RefSeq" id="WP_011769458.1">
    <property type="nucleotide sequence ID" value="NC_008709.1"/>
</dbReference>
<dbReference type="SMR" id="A1STT0"/>
<dbReference type="STRING" id="357804.Ping_1056"/>
<dbReference type="KEGG" id="pin:Ping_1056"/>
<dbReference type="eggNOG" id="COG0133">
    <property type="taxonomic scope" value="Bacteria"/>
</dbReference>
<dbReference type="HOGENOM" id="CLU_016734_3_1_6"/>
<dbReference type="OrthoDB" id="9766131at2"/>
<dbReference type="UniPathway" id="UPA00035">
    <property type="reaction ID" value="UER00044"/>
</dbReference>
<dbReference type="Proteomes" id="UP000000639">
    <property type="component" value="Chromosome"/>
</dbReference>
<dbReference type="GO" id="GO:0005737">
    <property type="term" value="C:cytoplasm"/>
    <property type="evidence" value="ECO:0007669"/>
    <property type="project" value="TreeGrafter"/>
</dbReference>
<dbReference type="GO" id="GO:0004834">
    <property type="term" value="F:tryptophan synthase activity"/>
    <property type="evidence" value="ECO:0007669"/>
    <property type="project" value="UniProtKB-UniRule"/>
</dbReference>
<dbReference type="CDD" id="cd06446">
    <property type="entry name" value="Trp-synth_B"/>
    <property type="match status" value="1"/>
</dbReference>
<dbReference type="FunFam" id="3.40.50.1100:FF:000001">
    <property type="entry name" value="Tryptophan synthase beta chain"/>
    <property type="match status" value="1"/>
</dbReference>
<dbReference type="FunFam" id="3.40.50.1100:FF:000004">
    <property type="entry name" value="Tryptophan synthase beta chain"/>
    <property type="match status" value="1"/>
</dbReference>
<dbReference type="Gene3D" id="3.40.50.1100">
    <property type="match status" value="2"/>
</dbReference>
<dbReference type="HAMAP" id="MF_00133">
    <property type="entry name" value="Trp_synth_beta"/>
    <property type="match status" value="1"/>
</dbReference>
<dbReference type="InterPro" id="IPR006653">
    <property type="entry name" value="Trp_synth_b_CS"/>
</dbReference>
<dbReference type="InterPro" id="IPR006654">
    <property type="entry name" value="Trp_synth_beta"/>
</dbReference>
<dbReference type="InterPro" id="IPR023026">
    <property type="entry name" value="Trp_synth_beta/beta-like"/>
</dbReference>
<dbReference type="InterPro" id="IPR001926">
    <property type="entry name" value="TrpB-like_PALP"/>
</dbReference>
<dbReference type="InterPro" id="IPR036052">
    <property type="entry name" value="TrpB-like_PALP_sf"/>
</dbReference>
<dbReference type="NCBIfam" id="TIGR00263">
    <property type="entry name" value="trpB"/>
    <property type="match status" value="1"/>
</dbReference>
<dbReference type="PANTHER" id="PTHR48077:SF3">
    <property type="entry name" value="TRYPTOPHAN SYNTHASE"/>
    <property type="match status" value="1"/>
</dbReference>
<dbReference type="PANTHER" id="PTHR48077">
    <property type="entry name" value="TRYPTOPHAN SYNTHASE-RELATED"/>
    <property type="match status" value="1"/>
</dbReference>
<dbReference type="Pfam" id="PF00291">
    <property type="entry name" value="PALP"/>
    <property type="match status" value="1"/>
</dbReference>
<dbReference type="PIRSF" id="PIRSF001413">
    <property type="entry name" value="Trp_syn_beta"/>
    <property type="match status" value="1"/>
</dbReference>
<dbReference type="SUPFAM" id="SSF53686">
    <property type="entry name" value="Tryptophan synthase beta subunit-like PLP-dependent enzymes"/>
    <property type="match status" value="1"/>
</dbReference>
<dbReference type="PROSITE" id="PS00168">
    <property type="entry name" value="TRP_SYNTHASE_BETA"/>
    <property type="match status" value="1"/>
</dbReference>
<reference key="1">
    <citation type="journal article" date="2008" name="BMC Genomics">
        <title>Genomics of an extreme psychrophile, Psychromonas ingrahamii.</title>
        <authorList>
            <person name="Riley M."/>
            <person name="Staley J.T."/>
            <person name="Danchin A."/>
            <person name="Wang T.Z."/>
            <person name="Brettin T.S."/>
            <person name="Hauser L.J."/>
            <person name="Land M.L."/>
            <person name="Thompson L.S."/>
        </authorList>
    </citation>
    <scope>NUCLEOTIDE SEQUENCE [LARGE SCALE GENOMIC DNA]</scope>
    <source>
        <strain>DSM 17664 / CCUG 51855 / 37</strain>
    </source>
</reference>
<evidence type="ECO:0000255" key="1">
    <source>
        <dbReference type="HAMAP-Rule" id="MF_00133"/>
    </source>
</evidence>
<sequence length="395" mass="42924">MEKLNPYFGQFGGMFVPQILVPALKQLEAEFVRAQTDPEFLAELSELLTEYAGRPTPLTLCRNLTKGKKTKLYLKREDLLHGGAHKTNQVLGQALLAKRMGKKEIIAETGAGQHGVAAALACALLGLKCRVYMGAVDCERQKPNVFRMRLMGAEVIPVHSGSSTLKDACNEALRDWAGSYDTAHYLLGTVAGPHPFPTIVREFQKIIGEEAKQQVLKKEGVLPDKVIACVGGGSNAIGIFNDFIDDPSVELIGVEPGGRGIETGKHGCPITYGSKGIFFGMHSLMMQDKHGQVKESYSISAGLDFPSVGPQHAHLAETGRAQYVYATDDEALDAFHELSLKEGIIPALESAHALAHALKLIKHDDKEQIIIVNLSGRGDKDIFTVAEIFEERGIL</sequence>
<proteinExistence type="inferred from homology"/>
<name>TRPB_PSYIN</name>
<keyword id="KW-0028">Amino-acid biosynthesis</keyword>
<keyword id="KW-0057">Aromatic amino acid biosynthesis</keyword>
<keyword id="KW-0456">Lyase</keyword>
<keyword id="KW-0663">Pyridoxal phosphate</keyword>
<keyword id="KW-1185">Reference proteome</keyword>
<keyword id="KW-0822">Tryptophan biosynthesis</keyword>
<accession>A1STT0</accession>
<feature type="chain" id="PRO_1000076402" description="Tryptophan synthase beta chain">
    <location>
        <begin position="1"/>
        <end position="395"/>
    </location>
</feature>
<feature type="modified residue" description="N6-(pyridoxal phosphate)lysine" evidence="1">
    <location>
        <position position="86"/>
    </location>
</feature>